<feature type="chain" id="PRO_0000259934" description="Terminal nucleotidyltransferase 5C">
    <location>
        <begin position="1"/>
        <end position="391"/>
    </location>
</feature>
<comment type="function">
    <text evidence="1">Catalyzes the transfer of one adenosine molecule from an ATP to an mRNA poly(A) tail bearing a 3'-OH terminal group and enhances mRNA stability and gene expression. Can also elongate RNA oligos ending with uridine molecule, provided that the sequence is adenosine-rich. Mainly targets mRNAs encoding endoplasmic reticulum-targeted protein.</text>
</comment>
<comment type="catalytic activity">
    <reaction evidence="1">
        <text>RNA(n) + ATP = RNA(n)-3'-adenine ribonucleotide + diphosphate</text>
        <dbReference type="Rhea" id="RHEA:11332"/>
        <dbReference type="Rhea" id="RHEA-COMP:14527"/>
        <dbReference type="Rhea" id="RHEA-COMP:17347"/>
        <dbReference type="ChEBI" id="CHEBI:30616"/>
        <dbReference type="ChEBI" id="CHEBI:33019"/>
        <dbReference type="ChEBI" id="CHEBI:140395"/>
        <dbReference type="ChEBI" id="CHEBI:173115"/>
        <dbReference type="EC" id="2.7.7.19"/>
    </reaction>
    <physiologicalReaction direction="left-to-right" evidence="1">
        <dbReference type="Rhea" id="RHEA:11333"/>
    </physiologicalReaction>
</comment>
<comment type="subunit">
    <text evidence="1">Interacts with BCCIP and PABPC1; the interaction has no effect on TENT5C poly(A) polymerase function. Interacts with PLK4; this interaction leads to the TENT5C recruitment into the centrosome.</text>
</comment>
<comment type="subcellular location">
    <subcellularLocation>
        <location evidence="1">Nucleus</location>
    </subcellularLocation>
    <subcellularLocation>
        <location evidence="1">Cytoplasm</location>
    </subcellularLocation>
    <subcellularLocation>
        <location evidence="1">Cytoplasm</location>
        <location evidence="1">Cytoskeleton</location>
        <location evidence="1">Microtubule organizing center</location>
        <location evidence="1">Centrosome</location>
    </subcellularLocation>
    <text evidence="1">Recruited into the centrosome through its interaction with PLK4.</text>
</comment>
<comment type="similarity">
    <text evidence="3">Belongs to the TENT family.</text>
</comment>
<organism>
    <name type="scientific">Macaca fascicularis</name>
    <name type="common">Crab-eating macaque</name>
    <name type="synonym">Cynomolgus monkey</name>
    <dbReference type="NCBI Taxonomy" id="9541"/>
    <lineage>
        <taxon>Eukaryota</taxon>
        <taxon>Metazoa</taxon>
        <taxon>Chordata</taxon>
        <taxon>Craniata</taxon>
        <taxon>Vertebrata</taxon>
        <taxon>Euteleostomi</taxon>
        <taxon>Mammalia</taxon>
        <taxon>Eutheria</taxon>
        <taxon>Euarchontoglires</taxon>
        <taxon>Primates</taxon>
        <taxon>Haplorrhini</taxon>
        <taxon>Catarrhini</taxon>
        <taxon>Cercopithecidae</taxon>
        <taxon>Cercopithecinae</taxon>
        <taxon>Macaca</taxon>
    </lineage>
</organism>
<dbReference type="EC" id="2.7.7.19" evidence="1"/>
<dbReference type="EMBL" id="AB168323">
    <property type="protein sequence ID" value="BAE00447.1"/>
    <property type="molecule type" value="mRNA"/>
</dbReference>
<dbReference type="RefSeq" id="NP_001271000.1">
    <property type="nucleotide sequence ID" value="NM_001284071.1"/>
</dbReference>
<dbReference type="SMR" id="Q4R8X4"/>
<dbReference type="STRING" id="9541.ENSMFAP00000011927"/>
<dbReference type="eggNOG" id="KOG3852">
    <property type="taxonomic scope" value="Eukaryota"/>
</dbReference>
<dbReference type="Proteomes" id="UP000233100">
    <property type="component" value="Unplaced"/>
</dbReference>
<dbReference type="GO" id="GO:0005813">
    <property type="term" value="C:centrosome"/>
    <property type="evidence" value="ECO:0000250"/>
    <property type="project" value="UniProtKB"/>
</dbReference>
<dbReference type="GO" id="GO:0005737">
    <property type="term" value="C:cytoplasm"/>
    <property type="evidence" value="ECO:0000250"/>
    <property type="project" value="UniProtKB"/>
</dbReference>
<dbReference type="GO" id="GO:0005634">
    <property type="term" value="C:nucleus"/>
    <property type="evidence" value="ECO:0000250"/>
    <property type="project" value="UniProtKB"/>
</dbReference>
<dbReference type="GO" id="GO:1990817">
    <property type="term" value="F:poly(A) RNA polymerase activity"/>
    <property type="evidence" value="ECO:0000250"/>
    <property type="project" value="UniProtKB"/>
</dbReference>
<dbReference type="GO" id="GO:0003723">
    <property type="term" value="F:RNA binding"/>
    <property type="evidence" value="ECO:0007669"/>
    <property type="project" value="UniProtKB-KW"/>
</dbReference>
<dbReference type="GO" id="GO:0048255">
    <property type="term" value="P:mRNA stabilization"/>
    <property type="evidence" value="ECO:0000250"/>
    <property type="project" value="UniProtKB"/>
</dbReference>
<dbReference type="GO" id="GO:0045596">
    <property type="term" value="P:negative regulation of cell differentiation"/>
    <property type="evidence" value="ECO:0000250"/>
    <property type="project" value="UniProtKB"/>
</dbReference>
<dbReference type="InterPro" id="IPR012937">
    <property type="entry name" value="TET5"/>
</dbReference>
<dbReference type="PANTHER" id="PTHR12974">
    <property type="entry name" value="PRION-LIKE- Q/N-RICH -DOMAIN-BEARING PROTEIN PROTEIN 44"/>
    <property type="match status" value="1"/>
</dbReference>
<dbReference type="PANTHER" id="PTHR12974:SF34">
    <property type="entry name" value="TERMINAL NUCLEOTIDYLTRANSFERASE 5C"/>
    <property type="match status" value="1"/>
</dbReference>
<dbReference type="Pfam" id="PF07984">
    <property type="entry name" value="NTP_transf_7"/>
    <property type="match status" value="1"/>
</dbReference>
<dbReference type="SMART" id="SM01153">
    <property type="entry name" value="DUF1693"/>
    <property type="match status" value="1"/>
</dbReference>
<sequence length="391" mass="44963">MAEESSCTRDCMSFSVLNWDQVSRLHEVLTEVVPIHGRGNFPTLEITLKDIVQTVRSRLEEAGIKVQDVRLNGSAAGHVLVKDNGLGCKDLDLIFHVALPTEAEFQLVRDVVLCSLLNFLPEGVNKLKISPVTLKEAYVQKLVKVCTDTDRWSLISLSNKNGKNVELKFVDSIRRQFEFSVDSFQIILDSLLFFYDCSNNPISEHFHPTVIGESMYGDFEEAFDHLQNRLIATKNPEEIRGGGLLKYSNLLVRDFRPTDQEEIETLERYMCSRFFIDFPDILEQQRKLETYLQNHFAEEERSKYDYLMILRRVVNESTVCLMGHERRQTLNLISLLALRVLAEQNIIPNATNVTCYYQPAPYVSDGNFSNYYVAHPPVTYSQPYPTWLPCN</sequence>
<accession>Q4R8X4</accession>
<name>TET5C_MACFA</name>
<keyword id="KW-0963">Cytoplasm</keyword>
<keyword id="KW-0206">Cytoskeleton</keyword>
<keyword id="KW-0548">Nucleotidyltransferase</keyword>
<keyword id="KW-0539">Nucleus</keyword>
<keyword id="KW-1185">Reference proteome</keyword>
<keyword id="KW-0694">RNA-binding</keyword>
<keyword id="KW-0808">Transferase</keyword>
<proteinExistence type="evidence at transcript level"/>
<protein>
    <recommendedName>
        <fullName evidence="3">Terminal nucleotidyltransferase 5C</fullName>
        <ecNumber evidence="1">2.7.7.19</ecNumber>
    </recommendedName>
</protein>
<evidence type="ECO:0000250" key="1">
    <source>
        <dbReference type="UniProtKB" id="Q5VWP2"/>
    </source>
</evidence>
<evidence type="ECO:0000303" key="2">
    <source ref="1"/>
</evidence>
<evidence type="ECO:0000305" key="3"/>
<gene>
    <name evidence="1" type="primary">TENT5C</name>
    <name evidence="1" type="synonym">FAM46C</name>
    <name evidence="2" type="ORF">QtsA-11212</name>
</gene>
<reference key="1">
    <citation type="submission" date="2005-06" db="EMBL/GenBank/DDBJ databases">
        <title>DNA sequences of macaque genes expressed in brain or testis and its evolutionary implications.</title>
        <authorList>
            <consortium name="International consortium for macaque cDNA sequencing and analysis"/>
        </authorList>
    </citation>
    <scope>NUCLEOTIDE SEQUENCE [LARGE SCALE MRNA]</scope>
    <source>
        <tissue>Testis</tissue>
    </source>
</reference>